<accession>Q6UWV7</accession>
<accession>Q6ZRG4</accession>
<proteinExistence type="evidence at protein level"/>
<name>SHL2A_HUMAN</name>
<sequence>MSGACTSYVSAEQEVVRGFSCPRPGGEAAAVFCCGFRDHKYCCDDPHSFFPYEHSYMWWLSIGALIGLSVAAVVLLAFIVTACVLCYLFISSKPHTKLDLGLSLQTAGPEEVSPDCQGVNTGMAAEVPKVSPLQQSYSCLNPQLESNEGQAVNSKRLLHHCFMATVTTSDIPGSPEEASVPNPDLCGPVP</sequence>
<feature type="chain" id="PRO_0000317720" description="Protein shisa-like-2A">
    <location>
        <begin position="1"/>
        <end position="190"/>
    </location>
</feature>
<feature type="transmembrane region" description="Helical" evidence="1">
    <location>
        <begin position="48"/>
        <end position="68"/>
    </location>
</feature>
<feature type="transmembrane region" description="Helical" evidence="1">
    <location>
        <begin position="70"/>
        <end position="90"/>
    </location>
</feature>
<feature type="splice variant" id="VSP_031139" description="In isoform 2." evidence="2">
    <original>EEVSPDCQGVNTGMAAEVPKVSPLQQSYSCLNPQLESNEGQAVNSKRLLHHCFMATVTTSDIPGSPEEASVPNPDLCGPVP</original>
    <variation>VQVATNKRNQTVLTLKGLTWRTRQAHKWPGGPVVALHGALGRKK</variation>
    <location>
        <begin position="110"/>
        <end position="190"/>
    </location>
</feature>
<protein>
    <recommendedName>
        <fullName evidence="4">Protein shisa-like-2A</fullName>
    </recommendedName>
</protein>
<reference key="1">
    <citation type="journal article" date="2004" name="Nat. Genet.">
        <title>Complete sequencing and characterization of 21,243 full-length human cDNAs.</title>
        <authorList>
            <person name="Ota T."/>
            <person name="Suzuki Y."/>
            <person name="Nishikawa T."/>
            <person name="Otsuki T."/>
            <person name="Sugiyama T."/>
            <person name="Irie R."/>
            <person name="Wakamatsu A."/>
            <person name="Hayashi K."/>
            <person name="Sato H."/>
            <person name="Nagai K."/>
            <person name="Kimura K."/>
            <person name="Makita H."/>
            <person name="Sekine M."/>
            <person name="Obayashi M."/>
            <person name="Nishi T."/>
            <person name="Shibahara T."/>
            <person name="Tanaka T."/>
            <person name="Ishii S."/>
            <person name="Yamamoto J."/>
            <person name="Saito K."/>
            <person name="Kawai Y."/>
            <person name="Isono Y."/>
            <person name="Nakamura Y."/>
            <person name="Nagahari K."/>
            <person name="Murakami K."/>
            <person name="Yasuda T."/>
            <person name="Iwayanagi T."/>
            <person name="Wagatsuma M."/>
            <person name="Shiratori A."/>
            <person name="Sudo H."/>
            <person name="Hosoiri T."/>
            <person name="Kaku Y."/>
            <person name="Kodaira H."/>
            <person name="Kondo H."/>
            <person name="Sugawara M."/>
            <person name="Takahashi M."/>
            <person name="Kanda K."/>
            <person name="Yokoi T."/>
            <person name="Furuya T."/>
            <person name="Kikkawa E."/>
            <person name="Omura Y."/>
            <person name="Abe K."/>
            <person name="Kamihara K."/>
            <person name="Katsuta N."/>
            <person name="Sato K."/>
            <person name="Tanikawa M."/>
            <person name="Yamazaki M."/>
            <person name="Ninomiya K."/>
            <person name="Ishibashi T."/>
            <person name="Yamashita H."/>
            <person name="Murakawa K."/>
            <person name="Fujimori K."/>
            <person name="Tanai H."/>
            <person name="Kimata M."/>
            <person name="Watanabe M."/>
            <person name="Hiraoka S."/>
            <person name="Chiba Y."/>
            <person name="Ishida S."/>
            <person name="Ono Y."/>
            <person name="Takiguchi S."/>
            <person name="Watanabe S."/>
            <person name="Yosida M."/>
            <person name="Hotuta T."/>
            <person name="Kusano J."/>
            <person name="Kanehori K."/>
            <person name="Takahashi-Fujii A."/>
            <person name="Hara H."/>
            <person name="Tanase T.-O."/>
            <person name="Nomura Y."/>
            <person name="Togiya S."/>
            <person name="Komai F."/>
            <person name="Hara R."/>
            <person name="Takeuchi K."/>
            <person name="Arita M."/>
            <person name="Imose N."/>
            <person name="Musashino K."/>
            <person name="Yuuki H."/>
            <person name="Oshima A."/>
            <person name="Sasaki N."/>
            <person name="Aotsuka S."/>
            <person name="Yoshikawa Y."/>
            <person name="Matsunawa H."/>
            <person name="Ichihara T."/>
            <person name="Shiohata N."/>
            <person name="Sano S."/>
            <person name="Moriya S."/>
            <person name="Momiyama H."/>
            <person name="Satoh N."/>
            <person name="Takami S."/>
            <person name="Terashima Y."/>
            <person name="Suzuki O."/>
            <person name="Nakagawa S."/>
            <person name="Senoh A."/>
            <person name="Mizoguchi H."/>
            <person name="Goto Y."/>
            <person name="Shimizu F."/>
            <person name="Wakebe H."/>
            <person name="Hishigaki H."/>
            <person name="Watanabe T."/>
            <person name="Sugiyama A."/>
            <person name="Takemoto M."/>
            <person name="Kawakami B."/>
            <person name="Yamazaki M."/>
            <person name="Watanabe K."/>
            <person name="Kumagai A."/>
            <person name="Itakura S."/>
            <person name="Fukuzumi Y."/>
            <person name="Fujimori Y."/>
            <person name="Komiyama M."/>
            <person name="Tashiro H."/>
            <person name="Tanigami A."/>
            <person name="Fujiwara T."/>
            <person name="Ono T."/>
            <person name="Yamada K."/>
            <person name="Fujii Y."/>
            <person name="Ozaki K."/>
            <person name="Hirao M."/>
            <person name="Ohmori Y."/>
            <person name="Kawabata A."/>
            <person name="Hikiji T."/>
            <person name="Kobatake N."/>
            <person name="Inagaki H."/>
            <person name="Ikema Y."/>
            <person name="Okamoto S."/>
            <person name="Okitani R."/>
            <person name="Kawakami T."/>
            <person name="Noguchi S."/>
            <person name="Itoh T."/>
            <person name="Shigeta K."/>
            <person name="Senba T."/>
            <person name="Matsumura K."/>
            <person name="Nakajima Y."/>
            <person name="Mizuno T."/>
            <person name="Morinaga M."/>
            <person name="Sasaki M."/>
            <person name="Togashi T."/>
            <person name="Oyama M."/>
            <person name="Hata H."/>
            <person name="Watanabe M."/>
            <person name="Komatsu T."/>
            <person name="Mizushima-Sugano J."/>
            <person name="Satoh T."/>
            <person name="Shirai Y."/>
            <person name="Takahashi Y."/>
            <person name="Nakagawa K."/>
            <person name="Okumura K."/>
            <person name="Nagase T."/>
            <person name="Nomura N."/>
            <person name="Kikuchi H."/>
            <person name="Masuho Y."/>
            <person name="Yamashita R."/>
            <person name="Nakai K."/>
            <person name="Yada T."/>
            <person name="Nakamura Y."/>
            <person name="Ohara O."/>
            <person name="Isogai T."/>
            <person name="Sugano S."/>
        </authorList>
    </citation>
    <scope>NUCLEOTIDE SEQUENCE [LARGE SCALE MRNA] (ISOFORM 2)</scope>
    <source>
        <tissue>Testis</tissue>
    </source>
</reference>
<reference key="2">
    <citation type="submission" date="2005-09" db="EMBL/GenBank/DDBJ databases">
        <authorList>
            <person name="Mural R.J."/>
            <person name="Istrail S."/>
            <person name="Sutton G.G."/>
            <person name="Florea L."/>
            <person name="Halpern A.L."/>
            <person name="Mobarry C.M."/>
            <person name="Lippert R."/>
            <person name="Walenz B."/>
            <person name="Shatkay H."/>
            <person name="Dew I."/>
            <person name="Miller J.R."/>
            <person name="Flanigan M.J."/>
            <person name="Edwards N.J."/>
            <person name="Bolanos R."/>
            <person name="Fasulo D."/>
            <person name="Halldorsson B.V."/>
            <person name="Hannenhalli S."/>
            <person name="Turner R."/>
            <person name="Yooseph S."/>
            <person name="Lu F."/>
            <person name="Nusskern D.R."/>
            <person name="Shue B.C."/>
            <person name="Zheng X.H."/>
            <person name="Zhong F."/>
            <person name="Delcher A.L."/>
            <person name="Huson D.H."/>
            <person name="Kravitz S.A."/>
            <person name="Mouchard L."/>
            <person name="Reinert K."/>
            <person name="Remington K.A."/>
            <person name="Clark A.G."/>
            <person name="Waterman M.S."/>
            <person name="Eichler E.E."/>
            <person name="Adams M.D."/>
            <person name="Hunkapiller M.W."/>
            <person name="Myers E.W."/>
            <person name="Venter J.C."/>
        </authorList>
    </citation>
    <scope>NUCLEOTIDE SEQUENCE [LARGE SCALE GENOMIC DNA]</scope>
</reference>
<reference key="3">
    <citation type="journal article" date="2006" name="Nature">
        <title>The DNA sequence and biological annotation of human chromosome 1.</title>
        <authorList>
            <person name="Gregory S.G."/>
            <person name="Barlow K.F."/>
            <person name="McLay K.E."/>
            <person name="Kaul R."/>
            <person name="Swarbreck D."/>
            <person name="Dunham A."/>
            <person name="Scott C.E."/>
            <person name="Howe K.L."/>
            <person name="Woodfine K."/>
            <person name="Spencer C.C.A."/>
            <person name="Jones M.C."/>
            <person name="Gillson C."/>
            <person name="Searle S."/>
            <person name="Zhou Y."/>
            <person name="Kokocinski F."/>
            <person name="McDonald L."/>
            <person name="Evans R."/>
            <person name="Phillips K."/>
            <person name="Atkinson A."/>
            <person name="Cooper R."/>
            <person name="Jones C."/>
            <person name="Hall R.E."/>
            <person name="Andrews T.D."/>
            <person name="Lloyd C."/>
            <person name="Ainscough R."/>
            <person name="Almeida J.P."/>
            <person name="Ambrose K.D."/>
            <person name="Anderson F."/>
            <person name="Andrew R.W."/>
            <person name="Ashwell R.I.S."/>
            <person name="Aubin K."/>
            <person name="Babbage A.K."/>
            <person name="Bagguley C.L."/>
            <person name="Bailey J."/>
            <person name="Beasley H."/>
            <person name="Bethel G."/>
            <person name="Bird C.P."/>
            <person name="Bray-Allen S."/>
            <person name="Brown J.Y."/>
            <person name="Brown A.J."/>
            <person name="Buckley D."/>
            <person name="Burton J."/>
            <person name="Bye J."/>
            <person name="Carder C."/>
            <person name="Chapman J.C."/>
            <person name="Clark S.Y."/>
            <person name="Clarke G."/>
            <person name="Clee C."/>
            <person name="Cobley V."/>
            <person name="Collier R.E."/>
            <person name="Corby N."/>
            <person name="Coville G.J."/>
            <person name="Davies J."/>
            <person name="Deadman R."/>
            <person name="Dunn M."/>
            <person name="Earthrowl M."/>
            <person name="Ellington A.G."/>
            <person name="Errington H."/>
            <person name="Frankish A."/>
            <person name="Frankland J."/>
            <person name="French L."/>
            <person name="Garner P."/>
            <person name="Garnett J."/>
            <person name="Gay L."/>
            <person name="Ghori M.R.J."/>
            <person name="Gibson R."/>
            <person name="Gilby L.M."/>
            <person name="Gillett W."/>
            <person name="Glithero R.J."/>
            <person name="Grafham D.V."/>
            <person name="Griffiths C."/>
            <person name="Griffiths-Jones S."/>
            <person name="Grocock R."/>
            <person name="Hammond S."/>
            <person name="Harrison E.S.I."/>
            <person name="Hart E."/>
            <person name="Haugen E."/>
            <person name="Heath P.D."/>
            <person name="Holmes S."/>
            <person name="Holt K."/>
            <person name="Howden P.J."/>
            <person name="Hunt A.R."/>
            <person name="Hunt S.E."/>
            <person name="Hunter G."/>
            <person name="Isherwood J."/>
            <person name="James R."/>
            <person name="Johnson C."/>
            <person name="Johnson D."/>
            <person name="Joy A."/>
            <person name="Kay M."/>
            <person name="Kershaw J.K."/>
            <person name="Kibukawa M."/>
            <person name="Kimberley A.M."/>
            <person name="King A."/>
            <person name="Knights A.J."/>
            <person name="Lad H."/>
            <person name="Laird G."/>
            <person name="Lawlor S."/>
            <person name="Leongamornlert D.A."/>
            <person name="Lloyd D.M."/>
            <person name="Loveland J."/>
            <person name="Lovell J."/>
            <person name="Lush M.J."/>
            <person name="Lyne R."/>
            <person name="Martin S."/>
            <person name="Mashreghi-Mohammadi M."/>
            <person name="Matthews L."/>
            <person name="Matthews N.S.W."/>
            <person name="McLaren S."/>
            <person name="Milne S."/>
            <person name="Mistry S."/>
            <person name="Moore M.J.F."/>
            <person name="Nickerson T."/>
            <person name="O'Dell C.N."/>
            <person name="Oliver K."/>
            <person name="Palmeiri A."/>
            <person name="Palmer S.A."/>
            <person name="Parker A."/>
            <person name="Patel D."/>
            <person name="Pearce A.V."/>
            <person name="Peck A.I."/>
            <person name="Pelan S."/>
            <person name="Phelps K."/>
            <person name="Phillimore B.J."/>
            <person name="Plumb R."/>
            <person name="Rajan J."/>
            <person name="Raymond C."/>
            <person name="Rouse G."/>
            <person name="Saenphimmachak C."/>
            <person name="Sehra H.K."/>
            <person name="Sheridan E."/>
            <person name="Shownkeen R."/>
            <person name="Sims S."/>
            <person name="Skuce C.D."/>
            <person name="Smith M."/>
            <person name="Steward C."/>
            <person name="Subramanian S."/>
            <person name="Sycamore N."/>
            <person name="Tracey A."/>
            <person name="Tromans A."/>
            <person name="Van Helmond Z."/>
            <person name="Wall M."/>
            <person name="Wallis J.M."/>
            <person name="White S."/>
            <person name="Whitehead S.L."/>
            <person name="Wilkinson J.E."/>
            <person name="Willey D.L."/>
            <person name="Williams H."/>
            <person name="Wilming L."/>
            <person name="Wray P.W."/>
            <person name="Wu Z."/>
            <person name="Coulson A."/>
            <person name="Vaudin M."/>
            <person name="Sulston J.E."/>
            <person name="Durbin R.M."/>
            <person name="Hubbard T."/>
            <person name="Wooster R."/>
            <person name="Dunham I."/>
            <person name="Carter N.P."/>
            <person name="McVean G."/>
            <person name="Ross M.T."/>
            <person name="Harrow J."/>
            <person name="Olson M.V."/>
            <person name="Beck S."/>
            <person name="Rogers J."/>
            <person name="Bentley D.R."/>
        </authorList>
    </citation>
    <scope>NUCLEOTIDE SEQUENCE [LARGE SCALE GENOMIC DNA]</scope>
</reference>
<reference key="4">
    <citation type="journal article" date="2003" name="Genome Res.">
        <title>The secreted protein discovery initiative (SPDI), a large-scale effort to identify novel human secreted and transmembrane proteins: a bioinformatics assessment.</title>
        <authorList>
            <person name="Clark H.F."/>
            <person name="Gurney A.L."/>
            <person name="Abaya E."/>
            <person name="Baker K."/>
            <person name="Baldwin D.T."/>
            <person name="Brush J."/>
            <person name="Chen J."/>
            <person name="Chow B."/>
            <person name="Chui C."/>
            <person name="Crowley C."/>
            <person name="Currell B."/>
            <person name="Deuel B."/>
            <person name="Dowd P."/>
            <person name="Eaton D."/>
            <person name="Foster J.S."/>
            <person name="Grimaldi C."/>
            <person name="Gu Q."/>
            <person name="Hass P.E."/>
            <person name="Heldens S."/>
            <person name="Huang A."/>
            <person name="Kim H.S."/>
            <person name="Klimowski L."/>
            <person name="Jin Y."/>
            <person name="Johnson S."/>
            <person name="Lee J."/>
            <person name="Lewis L."/>
            <person name="Liao D."/>
            <person name="Mark M.R."/>
            <person name="Robbie E."/>
            <person name="Sanchez C."/>
            <person name="Schoenfeld J."/>
            <person name="Seshagiri S."/>
            <person name="Simmons L."/>
            <person name="Singh J."/>
            <person name="Smith V."/>
            <person name="Stinson J."/>
            <person name="Vagts A."/>
            <person name="Vandlen R.L."/>
            <person name="Watanabe C."/>
            <person name="Wieand D."/>
            <person name="Woods K."/>
            <person name="Xie M.-H."/>
            <person name="Yansura D.G."/>
            <person name="Yi S."/>
            <person name="Yu G."/>
            <person name="Yuan J."/>
            <person name="Zhang M."/>
            <person name="Zhang Z."/>
            <person name="Goddard A.D."/>
            <person name="Wood W.I."/>
            <person name="Godowski P.J."/>
            <person name="Gray A.M."/>
        </authorList>
    </citation>
    <scope>NUCLEOTIDE SEQUENCE [LARGE SCALE MRNA] OF 27-190 (ISOFORM 1)</scope>
</reference>
<evidence type="ECO:0000255" key="1"/>
<evidence type="ECO:0000303" key="2">
    <source>
    </source>
</evidence>
<evidence type="ECO:0000305" key="3"/>
<evidence type="ECO:0000312" key="4">
    <source>
        <dbReference type="HGNC" id="HGNC:28757"/>
    </source>
</evidence>
<keyword id="KW-0025">Alternative splicing</keyword>
<keyword id="KW-0472">Membrane</keyword>
<keyword id="KW-1185">Reference proteome</keyword>
<keyword id="KW-0812">Transmembrane</keyword>
<keyword id="KW-1133">Transmembrane helix</keyword>
<gene>
    <name evidence="4" type="primary">SHISAL2A</name>
    <name type="synonym">FAM159A</name>
    <name type="ORF">UNQ2783/PRO7171</name>
</gene>
<comment type="interaction">
    <interactant intactId="EBI-18396772">
        <id>Q6UWV7</id>
    </interactant>
    <interactant intactId="EBI-4402607">
        <id>Q9Y3E0</id>
        <label>GOLT1B</label>
    </interactant>
    <organismsDiffer>false</organismsDiffer>
    <experiments>3</experiments>
</comment>
<comment type="interaction">
    <interactant intactId="EBI-18396772">
        <id>Q6UWV7</id>
    </interactant>
    <interactant intactId="EBI-751204">
        <id>Q9BWQ6</id>
        <label>YIPF2</label>
    </interactant>
    <organismsDiffer>false</organismsDiffer>
    <experiments>3</experiments>
</comment>
<comment type="subcellular location">
    <subcellularLocation>
        <location evidence="3">Membrane</location>
        <topology evidence="3">Multi-pass membrane protein</topology>
    </subcellularLocation>
</comment>
<comment type="alternative products">
    <event type="alternative splicing"/>
    <isoform>
        <id>Q6UWV7-1</id>
        <name>1</name>
        <sequence type="displayed"/>
    </isoform>
    <isoform>
        <id>Q6UWV7-2</id>
        <name>2</name>
        <sequence type="described" ref="VSP_031139"/>
    </isoform>
</comment>
<comment type="miscellaneous">
    <molecule>Isoform 2</molecule>
    <text evidence="3">May be produced at very low levels due to a premature stop codon in the mRNA, leading to nonsense-mediated mRNA decay.</text>
</comment>
<comment type="similarity">
    <text evidence="3">Belongs to the shisa family.</text>
</comment>
<comment type="sequence caution" evidence="3">
    <conflict type="erroneous initiation">
        <sequence resource="EMBL-CDS" id="AAQ88984"/>
    </conflict>
    <text>Truncated N-terminus.</text>
</comment>
<organism>
    <name type="scientific">Homo sapiens</name>
    <name type="common">Human</name>
    <dbReference type="NCBI Taxonomy" id="9606"/>
    <lineage>
        <taxon>Eukaryota</taxon>
        <taxon>Metazoa</taxon>
        <taxon>Chordata</taxon>
        <taxon>Craniata</taxon>
        <taxon>Vertebrata</taxon>
        <taxon>Euteleostomi</taxon>
        <taxon>Mammalia</taxon>
        <taxon>Eutheria</taxon>
        <taxon>Euarchontoglires</taxon>
        <taxon>Primates</taxon>
        <taxon>Haplorrhini</taxon>
        <taxon>Catarrhini</taxon>
        <taxon>Hominidae</taxon>
        <taxon>Homo</taxon>
    </lineage>
</organism>
<dbReference type="EMBL" id="AK128236">
    <property type="protein sequence ID" value="BAC87346.1"/>
    <property type="molecule type" value="mRNA"/>
</dbReference>
<dbReference type="EMBL" id="AC099784">
    <property type="status" value="NOT_ANNOTATED_CDS"/>
    <property type="molecule type" value="Genomic_DNA"/>
</dbReference>
<dbReference type="EMBL" id="AL356976">
    <property type="status" value="NOT_ANNOTATED_CDS"/>
    <property type="molecule type" value="Genomic_DNA"/>
</dbReference>
<dbReference type="EMBL" id="CH471059">
    <property type="protein sequence ID" value="EAX06773.1"/>
    <property type="molecule type" value="Genomic_DNA"/>
</dbReference>
<dbReference type="EMBL" id="AY358621">
    <property type="protein sequence ID" value="AAQ88984.1"/>
    <property type="status" value="ALT_INIT"/>
    <property type="molecule type" value="mRNA"/>
</dbReference>
<dbReference type="CCDS" id="CCDS41336.1">
    <molecule id="Q6UWV7-1"/>
</dbReference>
<dbReference type="RefSeq" id="NP_001036158.1">
    <molecule id="Q6UWV7-1"/>
    <property type="nucleotide sequence ID" value="NM_001042693.3"/>
</dbReference>
<dbReference type="SMR" id="Q6UWV7"/>
<dbReference type="BioGRID" id="131521">
    <property type="interactions" value="3"/>
</dbReference>
<dbReference type="FunCoup" id="Q6UWV7">
    <property type="interactions" value="7"/>
</dbReference>
<dbReference type="IntAct" id="Q6UWV7">
    <property type="interactions" value="2"/>
</dbReference>
<dbReference type="STRING" id="9606.ENSP00000429726"/>
<dbReference type="BioMuta" id="FAM159A"/>
<dbReference type="DMDM" id="166991237"/>
<dbReference type="PaxDb" id="9606-ENSP00000429726"/>
<dbReference type="PeptideAtlas" id="Q6UWV7"/>
<dbReference type="Antibodypedia" id="52572">
    <property type="antibodies" value="14 antibodies from 11 providers"/>
</dbReference>
<dbReference type="DNASU" id="348378"/>
<dbReference type="Ensembl" id="ENST00000517870.2">
    <molecule id="Q6UWV7-1"/>
    <property type="protein sequence ID" value="ENSP00000429726.1"/>
    <property type="gene ID" value="ENSG00000182183.15"/>
</dbReference>
<dbReference type="GeneID" id="348378"/>
<dbReference type="KEGG" id="hsa:348378"/>
<dbReference type="MANE-Select" id="ENST00000517870.2">
    <property type="protein sequence ID" value="ENSP00000429726.1"/>
    <property type="RefSeq nucleotide sequence ID" value="NM_001042693.3"/>
    <property type="RefSeq protein sequence ID" value="NP_001036158.1"/>
</dbReference>
<dbReference type="UCSC" id="uc001cuf.4">
    <molecule id="Q6UWV7-1"/>
    <property type="organism name" value="human"/>
</dbReference>
<dbReference type="AGR" id="HGNC:28757"/>
<dbReference type="CTD" id="348378"/>
<dbReference type="DisGeNET" id="348378"/>
<dbReference type="GeneCards" id="SHISAL2A"/>
<dbReference type="HGNC" id="HGNC:28757">
    <property type="gene designation" value="SHISAL2A"/>
</dbReference>
<dbReference type="HPA" id="ENSG00000182183">
    <property type="expression patterns" value="Tissue enhanced (brain, intestine, lymphoid tissue)"/>
</dbReference>
<dbReference type="MIM" id="620218">
    <property type="type" value="gene"/>
</dbReference>
<dbReference type="neXtProt" id="NX_Q6UWV7"/>
<dbReference type="OpenTargets" id="ENSG00000182183"/>
<dbReference type="PharmGKB" id="PA162386717"/>
<dbReference type="VEuPathDB" id="HostDB:ENSG00000182183"/>
<dbReference type="eggNOG" id="ENOG502S15N">
    <property type="taxonomic scope" value="Eukaryota"/>
</dbReference>
<dbReference type="GeneTree" id="ENSGT00940000161304"/>
<dbReference type="HOGENOM" id="CLU_107203_0_0_1"/>
<dbReference type="InParanoid" id="Q6UWV7"/>
<dbReference type="OMA" id="CLLQHCF"/>
<dbReference type="OrthoDB" id="10062839at2759"/>
<dbReference type="PAN-GO" id="Q6UWV7">
    <property type="GO annotations" value="0 GO annotations based on evolutionary models"/>
</dbReference>
<dbReference type="PhylomeDB" id="Q6UWV7"/>
<dbReference type="TreeFam" id="TF335848"/>
<dbReference type="PathwayCommons" id="Q6UWV7"/>
<dbReference type="SignaLink" id="Q6UWV7"/>
<dbReference type="BioGRID-ORCS" id="348378">
    <property type="hits" value="11 hits in 1148 CRISPR screens"/>
</dbReference>
<dbReference type="GenomeRNAi" id="348378"/>
<dbReference type="Pharos" id="Q6UWV7">
    <property type="development level" value="Tdark"/>
</dbReference>
<dbReference type="PRO" id="PR:Q6UWV7"/>
<dbReference type="Proteomes" id="UP000005640">
    <property type="component" value="Chromosome 1"/>
</dbReference>
<dbReference type="RNAct" id="Q6UWV7">
    <property type="molecule type" value="protein"/>
</dbReference>
<dbReference type="Bgee" id="ENSG00000182183">
    <property type="expression patterns" value="Expressed in buccal mucosa cell and 105 other cell types or tissues"/>
</dbReference>
<dbReference type="GO" id="GO:0016020">
    <property type="term" value="C:membrane"/>
    <property type="evidence" value="ECO:0007669"/>
    <property type="project" value="UniProtKB-SubCell"/>
</dbReference>
<dbReference type="InterPro" id="IPR026910">
    <property type="entry name" value="Shisa"/>
</dbReference>
<dbReference type="InterPro" id="IPR053891">
    <property type="entry name" value="Shisa_N"/>
</dbReference>
<dbReference type="PANTHER" id="PTHR31395:SF3">
    <property type="entry name" value="PROTEIN SHISA-LIKE-2A"/>
    <property type="match status" value="1"/>
</dbReference>
<dbReference type="PANTHER" id="PTHR31395">
    <property type="entry name" value="SHISA"/>
    <property type="match status" value="1"/>
</dbReference>
<dbReference type="Pfam" id="PF13908">
    <property type="entry name" value="Shisa_N"/>
    <property type="match status" value="1"/>
</dbReference>